<proteinExistence type="inferred from homology"/>
<comment type="function">
    <text evidence="1">Binds together with bS18 to 16S ribosomal RNA.</text>
</comment>
<comment type="similarity">
    <text evidence="1">Belongs to the bacterial ribosomal protein bS6 family.</text>
</comment>
<gene>
    <name evidence="1" type="primary">rpsF</name>
    <name type="ordered locus">LBF_2046</name>
</gene>
<name>RS6_LEPBA</name>
<protein>
    <recommendedName>
        <fullName evidence="1">Small ribosomal subunit protein bS6</fullName>
    </recommendedName>
    <alternativeName>
        <fullName evidence="2">30S ribosomal protein S6</fullName>
    </alternativeName>
</protein>
<evidence type="ECO:0000255" key="1">
    <source>
        <dbReference type="HAMAP-Rule" id="MF_00360"/>
    </source>
</evidence>
<evidence type="ECO:0000305" key="2"/>
<dbReference type="EMBL" id="CP000777">
    <property type="protein sequence ID" value="ABZ94546.1"/>
    <property type="molecule type" value="Genomic_DNA"/>
</dbReference>
<dbReference type="RefSeq" id="WP_012389072.1">
    <property type="nucleotide sequence ID" value="NC_010842.1"/>
</dbReference>
<dbReference type="SMR" id="B0SB40"/>
<dbReference type="KEGG" id="lbf:LBF_2046"/>
<dbReference type="HOGENOM" id="CLU_113441_5_1_12"/>
<dbReference type="GO" id="GO:1990904">
    <property type="term" value="C:ribonucleoprotein complex"/>
    <property type="evidence" value="ECO:0007669"/>
    <property type="project" value="UniProtKB-KW"/>
</dbReference>
<dbReference type="GO" id="GO:0005840">
    <property type="term" value="C:ribosome"/>
    <property type="evidence" value="ECO:0007669"/>
    <property type="project" value="UniProtKB-KW"/>
</dbReference>
<dbReference type="GO" id="GO:0019843">
    <property type="term" value="F:rRNA binding"/>
    <property type="evidence" value="ECO:0007669"/>
    <property type="project" value="UniProtKB-UniRule"/>
</dbReference>
<dbReference type="GO" id="GO:0003735">
    <property type="term" value="F:structural constituent of ribosome"/>
    <property type="evidence" value="ECO:0007669"/>
    <property type="project" value="InterPro"/>
</dbReference>
<dbReference type="GO" id="GO:0006412">
    <property type="term" value="P:translation"/>
    <property type="evidence" value="ECO:0007669"/>
    <property type="project" value="UniProtKB-UniRule"/>
</dbReference>
<dbReference type="CDD" id="cd00473">
    <property type="entry name" value="bS6"/>
    <property type="match status" value="1"/>
</dbReference>
<dbReference type="Gene3D" id="3.30.70.60">
    <property type="match status" value="1"/>
</dbReference>
<dbReference type="HAMAP" id="MF_00360">
    <property type="entry name" value="Ribosomal_bS6"/>
    <property type="match status" value="1"/>
</dbReference>
<dbReference type="InterPro" id="IPR000529">
    <property type="entry name" value="Ribosomal_bS6"/>
</dbReference>
<dbReference type="InterPro" id="IPR035980">
    <property type="entry name" value="Ribosomal_bS6_sf"/>
</dbReference>
<dbReference type="InterPro" id="IPR020814">
    <property type="entry name" value="Ribosomal_S6_plastid/chlpt"/>
</dbReference>
<dbReference type="InterPro" id="IPR014717">
    <property type="entry name" value="Transl_elong_EF1B/ribsomal_bS6"/>
</dbReference>
<dbReference type="NCBIfam" id="TIGR00166">
    <property type="entry name" value="S6"/>
    <property type="match status" value="1"/>
</dbReference>
<dbReference type="Pfam" id="PF01250">
    <property type="entry name" value="Ribosomal_S6"/>
    <property type="match status" value="1"/>
</dbReference>
<dbReference type="SUPFAM" id="SSF54995">
    <property type="entry name" value="Ribosomal protein S6"/>
    <property type="match status" value="1"/>
</dbReference>
<reference key="1">
    <citation type="journal article" date="2008" name="PLoS ONE">
        <title>Genome sequence of the saprophyte Leptospira biflexa provides insights into the evolution of Leptospira and the pathogenesis of leptospirosis.</title>
        <authorList>
            <person name="Picardeau M."/>
            <person name="Bulach D.M."/>
            <person name="Bouchier C."/>
            <person name="Zuerner R.L."/>
            <person name="Zidane N."/>
            <person name="Wilson P.J."/>
            <person name="Creno S."/>
            <person name="Kuczek E.S."/>
            <person name="Bommezzadri S."/>
            <person name="Davis J.C."/>
            <person name="McGrath A."/>
            <person name="Johnson M.J."/>
            <person name="Boursaux-Eude C."/>
            <person name="Seemann T."/>
            <person name="Rouy Z."/>
            <person name="Coppel R.L."/>
            <person name="Rood J.I."/>
            <person name="Lajus A."/>
            <person name="Davies J.K."/>
            <person name="Medigue C."/>
            <person name="Adler B."/>
        </authorList>
    </citation>
    <scope>NUCLEOTIDE SEQUENCE [LARGE SCALE GENOMIC DNA]</scope>
    <source>
        <strain>Patoc 1 / Ames</strain>
    </source>
</reference>
<feature type="chain" id="PRO_1000120768" description="Small ribosomal subunit protein bS6">
    <location>
        <begin position="1"/>
        <end position="91"/>
    </location>
</feature>
<sequence length="91" mass="10429">MRNYEITNILREGNVEETKSAVKELLSKYNFTIQGEEDWGSKRLWHPVGQDEQGHFTLIKCSGSPTEVAKIEHEFKLNVNILKTLVIRANG</sequence>
<keyword id="KW-0687">Ribonucleoprotein</keyword>
<keyword id="KW-0689">Ribosomal protein</keyword>
<keyword id="KW-0694">RNA-binding</keyword>
<keyword id="KW-0699">rRNA-binding</keyword>
<organism>
    <name type="scientific">Leptospira biflexa serovar Patoc (strain Patoc 1 / Ames)</name>
    <dbReference type="NCBI Taxonomy" id="355278"/>
    <lineage>
        <taxon>Bacteria</taxon>
        <taxon>Pseudomonadati</taxon>
        <taxon>Spirochaetota</taxon>
        <taxon>Spirochaetia</taxon>
        <taxon>Leptospirales</taxon>
        <taxon>Leptospiraceae</taxon>
        <taxon>Leptospira</taxon>
    </lineage>
</organism>
<accession>B0SB40</accession>